<evidence type="ECO:0000255" key="1">
    <source>
        <dbReference type="HAMAP-Rule" id="MF_00013"/>
    </source>
</evidence>
<evidence type="ECO:0000255" key="2">
    <source>
        <dbReference type="PROSITE-ProRule" id="PRU01067"/>
    </source>
</evidence>
<reference key="1">
    <citation type="submission" date="2007-09" db="EMBL/GenBank/DDBJ databases">
        <title>Complete genome sequence of Rickettsia canadensis.</title>
        <authorList>
            <person name="Madan A."/>
            <person name="Fahey J."/>
            <person name="Helton E."/>
            <person name="Ketteman M."/>
            <person name="Madan A."/>
            <person name="Rodrigues S."/>
            <person name="Sanchez A."/>
            <person name="Whiting M."/>
            <person name="Dasch G."/>
            <person name="Eremeeva M."/>
        </authorList>
    </citation>
    <scope>NUCLEOTIDE SEQUENCE [LARGE SCALE GENOMIC DNA]</scope>
    <source>
        <strain>McKiel</strain>
    </source>
</reference>
<dbReference type="EC" id="2.3.1.181" evidence="1"/>
<dbReference type="EMBL" id="CP000409">
    <property type="protein sequence ID" value="ABV74033.1"/>
    <property type="molecule type" value="Genomic_DNA"/>
</dbReference>
<dbReference type="RefSeq" id="WP_012149228.1">
    <property type="nucleotide sequence ID" value="NC_009879.1"/>
</dbReference>
<dbReference type="SMR" id="A8F0A0"/>
<dbReference type="STRING" id="293613.A1E_05610"/>
<dbReference type="KEGG" id="rcm:A1E_05610"/>
<dbReference type="eggNOG" id="COG0321">
    <property type="taxonomic scope" value="Bacteria"/>
</dbReference>
<dbReference type="HOGENOM" id="CLU_035168_3_0_5"/>
<dbReference type="UniPathway" id="UPA00538">
    <property type="reaction ID" value="UER00592"/>
</dbReference>
<dbReference type="Proteomes" id="UP000007056">
    <property type="component" value="Chromosome"/>
</dbReference>
<dbReference type="GO" id="GO:0005737">
    <property type="term" value="C:cytoplasm"/>
    <property type="evidence" value="ECO:0007669"/>
    <property type="project" value="UniProtKB-SubCell"/>
</dbReference>
<dbReference type="GO" id="GO:0033819">
    <property type="term" value="F:lipoyl(octanoyl) transferase activity"/>
    <property type="evidence" value="ECO:0007669"/>
    <property type="project" value="UniProtKB-EC"/>
</dbReference>
<dbReference type="GO" id="GO:0036211">
    <property type="term" value="P:protein modification process"/>
    <property type="evidence" value="ECO:0007669"/>
    <property type="project" value="InterPro"/>
</dbReference>
<dbReference type="CDD" id="cd16444">
    <property type="entry name" value="LipB"/>
    <property type="match status" value="1"/>
</dbReference>
<dbReference type="Gene3D" id="3.30.930.10">
    <property type="entry name" value="Bira Bifunctional Protein, Domain 2"/>
    <property type="match status" value="1"/>
</dbReference>
<dbReference type="HAMAP" id="MF_00013">
    <property type="entry name" value="LipB"/>
    <property type="match status" value="1"/>
</dbReference>
<dbReference type="InterPro" id="IPR045864">
    <property type="entry name" value="aa-tRNA-synth_II/BPL/LPL"/>
</dbReference>
<dbReference type="InterPro" id="IPR004143">
    <property type="entry name" value="BPL_LPL_catalytic"/>
</dbReference>
<dbReference type="InterPro" id="IPR000544">
    <property type="entry name" value="Octanoyltransferase"/>
</dbReference>
<dbReference type="InterPro" id="IPR020605">
    <property type="entry name" value="Octanoyltransferase_CS"/>
</dbReference>
<dbReference type="NCBIfam" id="TIGR00214">
    <property type="entry name" value="lipB"/>
    <property type="match status" value="1"/>
</dbReference>
<dbReference type="NCBIfam" id="NF010921">
    <property type="entry name" value="PRK14341.1"/>
    <property type="match status" value="1"/>
</dbReference>
<dbReference type="NCBIfam" id="NF010925">
    <property type="entry name" value="PRK14345.1"/>
    <property type="match status" value="1"/>
</dbReference>
<dbReference type="PANTHER" id="PTHR10993:SF7">
    <property type="entry name" value="LIPOYLTRANSFERASE 2, MITOCHONDRIAL-RELATED"/>
    <property type="match status" value="1"/>
</dbReference>
<dbReference type="PANTHER" id="PTHR10993">
    <property type="entry name" value="OCTANOYLTRANSFERASE"/>
    <property type="match status" value="1"/>
</dbReference>
<dbReference type="Pfam" id="PF21948">
    <property type="entry name" value="LplA-B_cat"/>
    <property type="match status" value="1"/>
</dbReference>
<dbReference type="PIRSF" id="PIRSF016262">
    <property type="entry name" value="LPLase"/>
    <property type="match status" value="1"/>
</dbReference>
<dbReference type="SUPFAM" id="SSF55681">
    <property type="entry name" value="Class II aaRS and biotin synthetases"/>
    <property type="match status" value="1"/>
</dbReference>
<dbReference type="PROSITE" id="PS51733">
    <property type="entry name" value="BPL_LPL_CATALYTIC"/>
    <property type="match status" value="1"/>
</dbReference>
<dbReference type="PROSITE" id="PS01313">
    <property type="entry name" value="LIPB"/>
    <property type="match status" value="1"/>
</dbReference>
<proteinExistence type="inferred from homology"/>
<feature type="chain" id="PRO_1000001125" description="Octanoyltransferase">
    <location>
        <begin position="1"/>
        <end position="209"/>
    </location>
</feature>
<feature type="domain" description="BPL/LPL catalytic" evidence="2">
    <location>
        <begin position="30"/>
        <end position="209"/>
    </location>
</feature>
<feature type="active site" description="Acyl-thioester intermediate" evidence="1">
    <location>
        <position position="174"/>
    </location>
</feature>
<feature type="binding site" evidence="1">
    <location>
        <begin position="69"/>
        <end position="76"/>
    </location>
    <ligand>
        <name>substrate</name>
    </ligand>
</feature>
<feature type="binding site" evidence="1">
    <location>
        <begin position="143"/>
        <end position="145"/>
    </location>
    <ligand>
        <name>substrate</name>
    </ligand>
</feature>
<feature type="binding site" evidence="1">
    <location>
        <begin position="156"/>
        <end position="158"/>
    </location>
    <ligand>
        <name>substrate</name>
    </ligand>
</feature>
<feature type="site" description="Lowers pKa of active site Cys" evidence="1">
    <location>
        <position position="140"/>
    </location>
</feature>
<comment type="function">
    <text evidence="1">Catalyzes the transfer of endogenously produced octanoic acid from octanoyl-acyl-carrier-protein onto the lipoyl domains of lipoate-dependent enzymes. Lipoyl-ACP can also act as a substrate although octanoyl-ACP is likely to be the physiological substrate.</text>
</comment>
<comment type="catalytic activity">
    <reaction evidence="1">
        <text>octanoyl-[ACP] + L-lysyl-[protein] = N(6)-octanoyl-L-lysyl-[protein] + holo-[ACP] + H(+)</text>
        <dbReference type="Rhea" id="RHEA:17665"/>
        <dbReference type="Rhea" id="RHEA-COMP:9636"/>
        <dbReference type="Rhea" id="RHEA-COMP:9685"/>
        <dbReference type="Rhea" id="RHEA-COMP:9752"/>
        <dbReference type="Rhea" id="RHEA-COMP:9928"/>
        <dbReference type="ChEBI" id="CHEBI:15378"/>
        <dbReference type="ChEBI" id="CHEBI:29969"/>
        <dbReference type="ChEBI" id="CHEBI:64479"/>
        <dbReference type="ChEBI" id="CHEBI:78463"/>
        <dbReference type="ChEBI" id="CHEBI:78809"/>
        <dbReference type="EC" id="2.3.1.181"/>
    </reaction>
</comment>
<comment type="pathway">
    <text evidence="1">Protein modification; protein lipoylation via endogenous pathway; protein N(6)-(lipoyl)lysine from octanoyl-[acyl-carrier-protein]: step 1/2.</text>
</comment>
<comment type="subcellular location">
    <subcellularLocation>
        <location evidence="1">Cytoplasm</location>
    </subcellularLocation>
</comment>
<comment type="miscellaneous">
    <text evidence="1">In the reaction, the free carboxyl group of octanoic acid is attached via an amide linkage to the epsilon-amino group of a specific lysine residue of lipoyl domains of lipoate-dependent enzymes.</text>
</comment>
<comment type="similarity">
    <text evidence="1">Belongs to the LipB family.</text>
</comment>
<sequence>MVQFVTIPNLTDYQVTLKLMQNYVNKVINVNEPEIVYLVEHSEVYTAGTNYKQEELLNYSDIPVIYTGRGGKFTFHGPGQRVIYPILNLASPNRSKDLKLYIKMLEEWIINSLNYFGIKAYLIKDKVGIWVKVRKDEFAKIAAIGIRVRKWVTYHGVAINISTDLSKFGGIIPCGLENSLVTSLNQLGVHIEMSEFDKIIQTEFNKIFT</sequence>
<gene>
    <name evidence="1" type="primary">lipB</name>
    <name type="ordered locus">A1E_05610</name>
</gene>
<keyword id="KW-0012">Acyltransferase</keyword>
<keyword id="KW-0963">Cytoplasm</keyword>
<keyword id="KW-0808">Transferase</keyword>
<organism>
    <name type="scientific">Rickettsia canadensis (strain McKiel)</name>
    <dbReference type="NCBI Taxonomy" id="293613"/>
    <lineage>
        <taxon>Bacteria</taxon>
        <taxon>Pseudomonadati</taxon>
        <taxon>Pseudomonadota</taxon>
        <taxon>Alphaproteobacteria</taxon>
        <taxon>Rickettsiales</taxon>
        <taxon>Rickettsiaceae</taxon>
        <taxon>Rickettsieae</taxon>
        <taxon>Rickettsia</taxon>
        <taxon>belli group</taxon>
    </lineage>
</organism>
<name>LIPB_RICCK</name>
<protein>
    <recommendedName>
        <fullName evidence="1">Octanoyltransferase</fullName>
        <ecNumber evidence="1">2.3.1.181</ecNumber>
    </recommendedName>
    <alternativeName>
        <fullName evidence="1">Lipoate-protein ligase B</fullName>
    </alternativeName>
    <alternativeName>
        <fullName evidence="1">Lipoyl/octanoyl transferase</fullName>
    </alternativeName>
    <alternativeName>
        <fullName evidence="1">Octanoyl-[acyl-carrier-protein]-protein N-octanoyltransferase</fullName>
    </alternativeName>
</protein>
<accession>A8F0A0</accession>